<comment type="function">
    <text evidence="1">One of two assembly initiator proteins, it binds directly to the 5'-end of the 23S rRNA, where it nucleates assembly of the 50S subunit.</text>
</comment>
<comment type="function">
    <text evidence="1">One of the proteins that surrounds the polypeptide exit tunnel on the outside of the subunit.</text>
</comment>
<comment type="subunit">
    <text evidence="1">Part of the 50S ribosomal subunit.</text>
</comment>
<comment type="similarity">
    <text evidence="1">Belongs to the universal ribosomal protein uL24 family.</text>
</comment>
<protein>
    <recommendedName>
        <fullName evidence="1">Large ribosomal subunit protein uL24</fullName>
    </recommendedName>
    <alternativeName>
        <fullName evidence="2">50S ribosomal protein L24</fullName>
    </alternativeName>
</protein>
<keyword id="KW-0687">Ribonucleoprotein</keyword>
<keyword id="KW-0689">Ribosomal protein</keyword>
<keyword id="KW-0694">RNA-binding</keyword>
<keyword id="KW-0699">rRNA-binding</keyword>
<feature type="chain" id="PRO_1000052243" description="Large ribosomal subunit protein uL24">
    <location>
        <begin position="1"/>
        <end position="106"/>
    </location>
</feature>
<organism>
    <name type="scientific">Marinobacter nauticus (strain ATCC 700491 / DSM 11845 / VT8)</name>
    <name type="common">Marinobacter aquaeolei</name>
    <dbReference type="NCBI Taxonomy" id="351348"/>
    <lineage>
        <taxon>Bacteria</taxon>
        <taxon>Pseudomonadati</taxon>
        <taxon>Pseudomonadota</taxon>
        <taxon>Gammaproteobacteria</taxon>
        <taxon>Pseudomonadales</taxon>
        <taxon>Marinobacteraceae</taxon>
        <taxon>Marinobacter</taxon>
    </lineage>
</organism>
<evidence type="ECO:0000255" key="1">
    <source>
        <dbReference type="HAMAP-Rule" id="MF_01326"/>
    </source>
</evidence>
<evidence type="ECO:0000305" key="2"/>
<reference key="1">
    <citation type="journal article" date="2011" name="Appl. Environ. Microbiol.">
        <title>Genomic potential of Marinobacter aquaeolei, a biogeochemical 'opportunitroph'.</title>
        <authorList>
            <person name="Singer E."/>
            <person name="Webb E.A."/>
            <person name="Nelson W.C."/>
            <person name="Heidelberg J.F."/>
            <person name="Ivanova N."/>
            <person name="Pati A."/>
            <person name="Edwards K.J."/>
        </authorList>
    </citation>
    <scope>NUCLEOTIDE SEQUENCE [LARGE SCALE GENOMIC DNA]</scope>
    <source>
        <strain>ATCC 700491 / DSM 11845 / VT8</strain>
    </source>
</reference>
<accession>A1TYK8</accession>
<sequence>MKKIKRDDEVIVTTGKDKDKRGKVLKVLDDGRVLVSGINMMKKHTKPNPMLGTPGGIVEKEAPIQASNVAIFNPQTGKADRVGFQIKEDGTKVRIFKSTNEAVDNQ</sequence>
<name>RL24_MARN8</name>
<dbReference type="EMBL" id="CP000514">
    <property type="protein sequence ID" value="ABM17827.1"/>
    <property type="molecule type" value="Genomic_DNA"/>
</dbReference>
<dbReference type="RefSeq" id="WP_011784253.1">
    <property type="nucleotide sequence ID" value="NC_008740.1"/>
</dbReference>
<dbReference type="SMR" id="A1TYK8"/>
<dbReference type="STRING" id="351348.Maqu_0730"/>
<dbReference type="GeneID" id="31820105"/>
<dbReference type="KEGG" id="maq:Maqu_0730"/>
<dbReference type="eggNOG" id="COG0198">
    <property type="taxonomic scope" value="Bacteria"/>
</dbReference>
<dbReference type="HOGENOM" id="CLU_093315_2_2_6"/>
<dbReference type="OrthoDB" id="9807419at2"/>
<dbReference type="Proteomes" id="UP000000998">
    <property type="component" value="Chromosome"/>
</dbReference>
<dbReference type="GO" id="GO:1990904">
    <property type="term" value="C:ribonucleoprotein complex"/>
    <property type="evidence" value="ECO:0007669"/>
    <property type="project" value="UniProtKB-KW"/>
</dbReference>
<dbReference type="GO" id="GO:0005840">
    <property type="term" value="C:ribosome"/>
    <property type="evidence" value="ECO:0007669"/>
    <property type="project" value="UniProtKB-KW"/>
</dbReference>
<dbReference type="GO" id="GO:0019843">
    <property type="term" value="F:rRNA binding"/>
    <property type="evidence" value="ECO:0007669"/>
    <property type="project" value="UniProtKB-UniRule"/>
</dbReference>
<dbReference type="GO" id="GO:0003735">
    <property type="term" value="F:structural constituent of ribosome"/>
    <property type="evidence" value="ECO:0007669"/>
    <property type="project" value="InterPro"/>
</dbReference>
<dbReference type="GO" id="GO:0006412">
    <property type="term" value="P:translation"/>
    <property type="evidence" value="ECO:0007669"/>
    <property type="project" value="UniProtKB-UniRule"/>
</dbReference>
<dbReference type="CDD" id="cd06089">
    <property type="entry name" value="KOW_RPL26"/>
    <property type="match status" value="1"/>
</dbReference>
<dbReference type="FunFam" id="2.30.30.30:FF:000004">
    <property type="entry name" value="50S ribosomal protein L24"/>
    <property type="match status" value="1"/>
</dbReference>
<dbReference type="Gene3D" id="2.30.30.30">
    <property type="match status" value="1"/>
</dbReference>
<dbReference type="HAMAP" id="MF_01326_B">
    <property type="entry name" value="Ribosomal_uL24_B"/>
    <property type="match status" value="1"/>
</dbReference>
<dbReference type="InterPro" id="IPR005824">
    <property type="entry name" value="KOW"/>
</dbReference>
<dbReference type="InterPro" id="IPR014722">
    <property type="entry name" value="Rib_uL2_dom2"/>
</dbReference>
<dbReference type="InterPro" id="IPR003256">
    <property type="entry name" value="Ribosomal_uL24"/>
</dbReference>
<dbReference type="InterPro" id="IPR041988">
    <property type="entry name" value="Ribosomal_uL24_KOW"/>
</dbReference>
<dbReference type="InterPro" id="IPR008991">
    <property type="entry name" value="Translation_prot_SH3-like_sf"/>
</dbReference>
<dbReference type="NCBIfam" id="TIGR01079">
    <property type="entry name" value="rplX_bact"/>
    <property type="match status" value="1"/>
</dbReference>
<dbReference type="PANTHER" id="PTHR12903">
    <property type="entry name" value="MITOCHONDRIAL RIBOSOMAL PROTEIN L24"/>
    <property type="match status" value="1"/>
</dbReference>
<dbReference type="Pfam" id="PF00467">
    <property type="entry name" value="KOW"/>
    <property type="match status" value="1"/>
</dbReference>
<dbReference type="Pfam" id="PF17136">
    <property type="entry name" value="ribosomal_L24"/>
    <property type="match status" value="1"/>
</dbReference>
<dbReference type="SMART" id="SM00739">
    <property type="entry name" value="KOW"/>
    <property type="match status" value="1"/>
</dbReference>
<dbReference type="SUPFAM" id="SSF50104">
    <property type="entry name" value="Translation proteins SH3-like domain"/>
    <property type="match status" value="1"/>
</dbReference>
<proteinExistence type="inferred from homology"/>
<gene>
    <name evidence="1" type="primary">rplX</name>
    <name type="ordered locus">Maqu_0730</name>
</gene>